<name>METXA_LEPIN</name>
<organism>
    <name type="scientific">Leptospira interrogans serogroup Icterohaemorrhagiae serovar Lai (strain 56601)</name>
    <dbReference type="NCBI Taxonomy" id="189518"/>
    <lineage>
        <taxon>Bacteria</taxon>
        <taxon>Pseudomonadati</taxon>
        <taxon>Spirochaetota</taxon>
        <taxon>Spirochaetia</taxon>
        <taxon>Leptospirales</taxon>
        <taxon>Leptospiraceae</taxon>
        <taxon>Leptospira</taxon>
    </lineage>
</organism>
<feature type="chain" id="PRO_0000155722" description="Homoserine O-acetyltransferase">
    <location>
        <begin position="1"/>
        <end position="366"/>
    </location>
</feature>
<feature type="domain" description="AB hydrolase-1" evidence="1">
    <location>
        <begin position="47"/>
        <end position="349"/>
    </location>
</feature>
<feature type="active site" description="Nucleophile" evidence="1 5">
    <location>
        <position position="153"/>
    </location>
</feature>
<feature type="active site" evidence="1 5">
    <location>
        <position position="311"/>
    </location>
</feature>
<feature type="active site" evidence="1 5">
    <location>
        <position position="344"/>
    </location>
</feature>
<feature type="binding site" evidence="1">
    <location>
        <position position="221"/>
    </location>
    <ligand>
        <name>substrate</name>
    </ligand>
</feature>
<feature type="binding site" evidence="1">
    <location>
        <position position="345"/>
    </location>
    <ligand>
        <name>substrate</name>
    </ligand>
</feature>
<feature type="strand" evidence="6">
    <location>
        <begin position="13"/>
        <end position="18"/>
    </location>
</feature>
<feature type="strand" evidence="6">
    <location>
        <begin position="27"/>
        <end position="39"/>
    </location>
</feature>
<feature type="strand" evidence="6">
    <location>
        <begin position="48"/>
        <end position="52"/>
    </location>
</feature>
<feature type="strand" evidence="6">
    <location>
        <begin position="62"/>
        <end position="66"/>
    </location>
</feature>
<feature type="turn" evidence="6">
    <location>
        <begin position="74"/>
        <end position="78"/>
    </location>
</feature>
<feature type="strand" evidence="6">
    <location>
        <begin position="83"/>
        <end position="86"/>
    </location>
</feature>
<feature type="turn" evidence="6">
    <location>
        <begin position="87"/>
        <end position="89"/>
    </location>
</feature>
<feature type="strand" evidence="6">
    <location>
        <begin position="91"/>
        <end position="95"/>
    </location>
</feature>
<feature type="strand" evidence="6">
    <location>
        <begin position="101"/>
        <end position="106"/>
    </location>
</feature>
<feature type="turn" evidence="6">
    <location>
        <begin position="112"/>
        <end position="114"/>
    </location>
</feature>
<feature type="strand" evidence="6">
    <location>
        <begin position="115"/>
        <end position="117"/>
    </location>
</feature>
<feature type="helix" evidence="6">
    <location>
        <begin position="119"/>
        <end position="121"/>
    </location>
</feature>
<feature type="helix" evidence="6">
    <location>
        <begin position="127"/>
        <end position="140"/>
    </location>
</feature>
<feature type="strand" evidence="6">
    <location>
        <begin position="144"/>
        <end position="152"/>
    </location>
</feature>
<feature type="helix" evidence="6">
    <location>
        <begin position="154"/>
        <end position="165"/>
    </location>
</feature>
<feature type="strand" evidence="6">
    <location>
        <begin position="169"/>
        <end position="177"/>
    </location>
</feature>
<feature type="helix" evidence="6">
    <location>
        <begin position="184"/>
        <end position="198"/>
    </location>
</feature>
<feature type="helix" evidence="6">
    <location>
        <begin position="204"/>
        <end position="206"/>
    </location>
</feature>
<feature type="strand" evidence="6">
    <location>
        <begin position="209"/>
        <end position="211"/>
    </location>
</feature>
<feature type="helix" evidence="6">
    <location>
        <begin position="214"/>
        <end position="226"/>
    </location>
</feature>
<feature type="helix" evidence="6">
    <location>
        <begin position="231"/>
        <end position="238"/>
    </location>
</feature>
<feature type="turn" evidence="6">
    <location>
        <begin position="247"/>
        <end position="253"/>
    </location>
</feature>
<feature type="helix" evidence="6">
    <location>
        <begin position="256"/>
        <end position="259"/>
    </location>
</feature>
<feature type="strand" evidence="6">
    <location>
        <begin position="265"/>
        <end position="267"/>
    </location>
</feature>
<feature type="helix" evidence="6">
    <location>
        <begin position="271"/>
        <end position="283"/>
    </location>
</feature>
<feature type="helix" evidence="6">
    <location>
        <begin position="289"/>
        <end position="296"/>
    </location>
</feature>
<feature type="strand" evidence="6">
    <location>
        <begin position="301"/>
        <end position="308"/>
    </location>
</feature>
<feature type="helix" evidence="6">
    <location>
        <begin position="316"/>
        <end position="328"/>
    </location>
</feature>
<feature type="strand" evidence="6">
    <location>
        <begin position="333"/>
        <end position="338"/>
    </location>
</feature>
<feature type="strand" evidence="6">
    <location>
        <begin position="342"/>
        <end position="344"/>
    </location>
</feature>
<feature type="helix" evidence="6">
    <location>
        <begin position="345"/>
        <end position="348"/>
    </location>
</feature>
<feature type="helix" evidence="6">
    <location>
        <begin position="352"/>
        <end position="363"/>
    </location>
</feature>
<protein>
    <recommendedName>
        <fullName evidence="1">Homoserine O-acetyltransferase</fullName>
        <shortName evidence="1 4">HAT</shortName>
        <ecNumber evidence="1 3">2.3.1.31</ecNumber>
    </recommendedName>
    <alternativeName>
        <fullName evidence="1">Homoserine transacetylase</fullName>
        <shortName evidence="1">HTA</shortName>
    </alternativeName>
</protein>
<proteinExistence type="evidence at protein level"/>
<comment type="function">
    <text evidence="2 3">Transfers an acetyl group from acetyl-CoA to L-homoserine, forming acetyl-L-homoserine (PubMed:17927957, PubMed:28581482). Utilizes a ping-pong kinetic mechanism in which the acetyl group of acetyl-CoA is initially transferred to the enzyme to form an acetyl-enzyme intermediate before subsequent transfer to homoserine to form the final product, O-acetylhomoserine (PubMed:17927957).</text>
</comment>
<comment type="catalytic activity">
    <reaction evidence="1 2 3">
        <text>L-homoserine + acetyl-CoA = O-acetyl-L-homoserine + CoA</text>
        <dbReference type="Rhea" id="RHEA:13701"/>
        <dbReference type="ChEBI" id="CHEBI:57287"/>
        <dbReference type="ChEBI" id="CHEBI:57288"/>
        <dbReference type="ChEBI" id="CHEBI:57476"/>
        <dbReference type="ChEBI" id="CHEBI:57716"/>
        <dbReference type="EC" id="2.3.1.31"/>
    </reaction>
</comment>
<comment type="biophysicochemical properties">
    <kinetics>
        <KM evidence="2">1.6 mM for L-homoserine</KM>
        <KM evidence="2">0.95 mM for acetyl-CoA</KM>
    </kinetics>
</comment>
<comment type="pathway">
    <text evidence="1">Amino-acid biosynthesis; L-methionine biosynthesis via de novo pathway; O-acetyl-L-homoserine from L-homoserine: step 1/1.</text>
</comment>
<comment type="subunit">
    <text evidence="1 2">Homodimer.</text>
</comment>
<comment type="subcellular location">
    <subcellularLocation>
        <location evidence="1">Cytoplasm</location>
    </subcellularLocation>
</comment>
<comment type="similarity">
    <text evidence="1">Belongs to the AB hydrolase superfamily. MetX family.</text>
</comment>
<accession>Q8F4I0</accession>
<evidence type="ECO:0000255" key="1">
    <source>
        <dbReference type="HAMAP-Rule" id="MF_00296"/>
    </source>
</evidence>
<evidence type="ECO:0000269" key="2">
    <source>
    </source>
</evidence>
<evidence type="ECO:0000269" key="3">
    <source>
    </source>
</evidence>
<evidence type="ECO:0000303" key="4">
    <source>
    </source>
</evidence>
<evidence type="ECO:0000305" key="5">
    <source>
    </source>
</evidence>
<evidence type="ECO:0007829" key="6">
    <source>
        <dbReference type="PDB" id="2PL5"/>
    </source>
</evidence>
<keyword id="KW-0002">3D-structure</keyword>
<keyword id="KW-0012">Acyltransferase</keyword>
<keyword id="KW-0028">Amino-acid biosynthesis</keyword>
<keyword id="KW-0963">Cytoplasm</keyword>
<keyword id="KW-0486">Methionine biosynthesis</keyword>
<keyword id="KW-1185">Reference proteome</keyword>
<keyword id="KW-0808">Transferase</keyword>
<sequence length="366" mass="40115">MNETGSIGIIETKYAEFKELILNNGSVLSPVVIAYETYGTLSSSKNNAILICHALSGDAHAAGYHSGSDKKPGWWDDYIGPGKSFDTNQYFIICSNVIGGCKGSSGPLSIHPETSTPYGSRFPFVSIQDMVKAQKLLVESLGIEKLFCVAGGSMGGMQALEWSIAYPNSLSNCIVMASTAEHSAMQIAFNEVGRQAILSDPNWKNGLYDENSPRKGLALARMVGHITYLSDDKMREKFGRNPPRGNILSTDFAVGSYLIYQGESFVDRFDANSYIYVTKALDHYSLGKGKELTAALSNATCRFLVVSYSSDWLYPPAQSREIVKSLEAADKRVFYVELQSGEGHDSFLLKNPKQIEILKGFLENPN</sequence>
<dbReference type="EC" id="2.3.1.31" evidence="1 3"/>
<dbReference type="EMBL" id="AE010300">
    <property type="protein sequence ID" value="AAN49260.1"/>
    <property type="molecule type" value="Genomic_DNA"/>
</dbReference>
<dbReference type="RefSeq" id="NP_712242.1">
    <property type="nucleotide sequence ID" value="NC_004342.2"/>
</dbReference>
<dbReference type="PDB" id="2PL5">
    <property type="method" value="X-ray"/>
    <property type="resolution" value="2.20 A"/>
    <property type="chains" value="A=1-366"/>
</dbReference>
<dbReference type="PDBsum" id="2PL5"/>
<dbReference type="SMR" id="Q8F4I0"/>
<dbReference type="STRING" id="189518.LA_2061"/>
<dbReference type="ESTHER" id="lepin-METX">
    <property type="family name" value="Homoserine_transacetylase"/>
</dbReference>
<dbReference type="PaxDb" id="189518-LA_2061"/>
<dbReference type="EnsemblBacteria" id="AAN49260">
    <property type="protein sequence ID" value="AAN49260"/>
    <property type="gene ID" value="LA_2061"/>
</dbReference>
<dbReference type="KEGG" id="lil:LA_2061"/>
<dbReference type="PATRIC" id="fig|189518.3.peg.2057"/>
<dbReference type="HOGENOM" id="CLU_028760_1_2_12"/>
<dbReference type="InParanoid" id="Q8F4I0"/>
<dbReference type="OrthoDB" id="9800754at2"/>
<dbReference type="BRENDA" id="2.3.1.31">
    <property type="organism ID" value="2986"/>
</dbReference>
<dbReference type="SABIO-RK" id="Q8F4I0"/>
<dbReference type="UniPathway" id="UPA00051">
    <property type="reaction ID" value="UER00074"/>
</dbReference>
<dbReference type="EvolutionaryTrace" id="Q8F4I0"/>
<dbReference type="Proteomes" id="UP000001408">
    <property type="component" value="Chromosome I"/>
</dbReference>
<dbReference type="GO" id="GO:0005737">
    <property type="term" value="C:cytoplasm"/>
    <property type="evidence" value="ECO:0007669"/>
    <property type="project" value="UniProtKB-SubCell"/>
</dbReference>
<dbReference type="GO" id="GO:0004414">
    <property type="term" value="F:homoserine O-acetyltransferase activity"/>
    <property type="evidence" value="ECO:0000314"/>
    <property type="project" value="UniProtKB"/>
</dbReference>
<dbReference type="GO" id="GO:0009086">
    <property type="term" value="P:methionine biosynthetic process"/>
    <property type="evidence" value="ECO:0000318"/>
    <property type="project" value="GO_Central"/>
</dbReference>
<dbReference type="FunFam" id="1.10.1740.110:FF:000001">
    <property type="entry name" value="Homoserine O-acetyltransferase"/>
    <property type="match status" value="1"/>
</dbReference>
<dbReference type="Gene3D" id="1.10.1740.110">
    <property type="match status" value="1"/>
</dbReference>
<dbReference type="Gene3D" id="3.40.50.1820">
    <property type="entry name" value="alpha/beta hydrolase"/>
    <property type="match status" value="1"/>
</dbReference>
<dbReference type="HAMAP" id="MF_00296">
    <property type="entry name" value="MetX_acyltransf"/>
    <property type="match status" value="1"/>
</dbReference>
<dbReference type="InterPro" id="IPR000073">
    <property type="entry name" value="AB_hydrolase_1"/>
</dbReference>
<dbReference type="InterPro" id="IPR029058">
    <property type="entry name" value="AB_hydrolase_fold"/>
</dbReference>
<dbReference type="InterPro" id="IPR008220">
    <property type="entry name" value="HAT_MetX-like"/>
</dbReference>
<dbReference type="NCBIfam" id="TIGR01392">
    <property type="entry name" value="homoserO_Ac_trn"/>
    <property type="match status" value="1"/>
</dbReference>
<dbReference type="NCBIfam" id="NF001209">
    <property type="entry name" value="PRK00175.1"/>
    <property type="match status" value="1"/>
</dbReference>
<dbReference type="PANTHER" id="PTHR32268">
    <property type="entry name" value="HOMOSERINE O-ACETYLTRANSFERASE"/>
    <property type="match status" value="1"/>
</dbReference>
<dbReference type="PANTHER" id="PTHR32268:SF11">
    <property type="entry name" value="HOMOSERINE O-ACETYLTRANSFERASE"/>
    <property type="match status" value="1"/>
</dbReference>
<dbReference type="Pfam" id="PF00561">
    <property type="entry name" value="Abhydrolase_1"/>
    <property type="match status" value="1"/>
</dbReference>
<dbReference type="PIRSF" id="PIRSF000443">
    <property type="entry name" value="Homoser_Ac_trans"/>
    <property type="match status" value="1"/>
</dbReference>
<dbReference type="SUPFAM" id="SSF53474">
    <property type="entry name" value="alpha/beta-Hydrolases"/>
    <property type="match status" value="1"/>
</dbReference>
<reference key="1">
    <citation type="journal article" date="2003" name="Nature">
        <title>Unique physiological and pathogenic features of Leptospira interrogans revealed by whole-genome sequencing.</title>
        <authorList>
            <person name="Ren S.-X."/>
            <person name="Fu G."/>
            <person name="Jiang X.-G."/>
            <person name="Zeng R."/>
            <person name="Miao Y.-G."/>
            <person name="Xu H."/>
            <person name="Zhang Y.-X."/>
            <person name="Xiong H."/>
            <person name="Lu G."/>
            <person name="Lu L.-F."/>
            <person name="Jiang H.-Q."/>
            <person name="Jia J."/>
            <person name="Tu Y.-F."/>
            <person name="Jiang J.-X."/>
            <person name="Gu W.-Y."/>
            <person name="Zhang Y.-Q."/>
            <person name="Cai Z."/>
            <person name="Sheng H.-H."/>
            <person name="Yin H.-F."/>
            <person name="Zhang Y."/>
            <person name="Zhu G.-F."/>
            <person name="Wan M."/>
            <person name="Huang H.-L."/>
            <person name="Qian Z."/>
            <person name="Wang S.-Y."/>
            <person name="Ma W."/>
            <person name="Yao Z.-J."/>
            <person name="Shen Y."/>
            <person name="Qiang B.-Q."/>
            <person name="Xia Q.-C."/>
            <person name="Guo X.-K."/>
            <person name="Danchin A."/>
            <person name="Saint Girons I."/>
            <person name="Somerville R.L."/>
            <person name="Wen Y.-M."/>
            <person name="Shi M.-H."/>
            <person name="Chen Z."/>
            <person name="Xu J.-G."/>
            <person name="Zhao G.-P."/>
        </authorList>
    </citation>
    <scope>NUCLEOTIDE SEQUENCE [LARGE SCALE GENOMIC DNA]</scope>
    <source>
        <strain>56601</strain>
    </source>
</reference>
<reference key="2">
    <citation type="journal article" date="2017" name="Nat. Chem. Biol.">
        <title>Parallel evolution of non-homologous isofunctional enzymes in methionine biosynthesis.</title>
        <authorList>
            <person name="Bastard K."/>
            <person name="Perret A."/>
            <person name="Mariage A."/>
            <person name="Bessonnet T."/>
            <person name="Pinet-Turpault A."/>
            <person name="Petit J.L."/>
            <person name="Darii E."/>
            <person name="Bazire P."/>
            <person name="Vergne-Vaxelaire C."/>
            <person name="Brewee C."/>
            <person name="Debard A."/>
            <person name="Pellouin V."/>
            <person name="Besnard-Gonnet M."/>
            <person name="Artiguenave F."/>
            <person name="Medigue C."/>
            <person name="Vallenet D."/>
            <person name="Danchin A."/>
            <person name="Zaparucha A."/>
            <person name="Weissenbach J."/>
            <person name="Salanoubat M."/>
            <person name="de Berardinis V."/>
        </authorList>
    </citation>
    <scope>FUNCTION</scope>
    <scope>CATALYTIC ACTIVITY</scope>
</reference>
<reference key="3">
    <citation type="journal article" date="2007" name="Biochem. Biophys. Res. Commun.">
        <title>Crystal structure of homoserine O-acetyltransferase from Leptospira interrogans.</title>
        <authorList>
            <person name="Wang M."/>
            <person name="Liu L."/>
            <person name="Wang Y."/>
            <person name="Wei Z."/>
            <person name="Zhang P."/>
            <person name="Li Y."/>
            <person name="Jiang X."/>
            <person name="Xu H."/>
            <person name="Gong W."/>
        </authorList>
    </citation>
    <scope>X-RAY CRYSTALLOGRAPHY (2.2 ANGSTROMS)</scope>
    <scope>FUNCTION</scope>
    <scope>CATALYTIC ACTIVITY</scope>
    <scope>BIOPHYSICOCHEMICAL PROPERTIES</scope>
    <scope>SUBUNIT</scope>
    <scope>ACTIVE SITE</scope>
</reference>
<gene>
    <name evidence="1 4" type="primary">metXA</name>
    <name type="ordered locus">LA_2061</name>
</gene>